<proteinExistence type="inferred from homology"/>
<comment type="function">
    <text>Mediates assembly of pili by forming soluble multimeric complexes with pili subunits as an intermediate step in the assembly process.</text>
</comment>
<comment type="subcellular location">
    <subcellularLocation>
        <location>Periplasm</location>
    </subcellularLocation>
</comment>
<comment type="similarity">
    <text evidence="1">Belongs to the periplasmic pilus chaperone family.</text>
</comment>
<accession>P42183</accession>
<name>PRSD_ECOLX</name>
<protein>
    <recommendedName>
        <fullName>Chaperone protein PrsD</fullName>
    </recommendedName>
</protein>
<gene>
    <name type="primary">prsD</name>
</gene>
<sequence length="115" mass="13080">LQIALQTKIKLFYRPAAIKTRPNEVWQDQLILNKVSGGYRIENPTPYYVTVIGLGGSEKQAEEGEFETVMLSPRSEQTVNRNYNTPYLSYINDYGGRPVLSFICNGSRCSVKKEK</sequence>
<evidence type="ECO:0000305" key="1"/>
<organism>
    <name type="scientific">Escherichia coli</name>
    <dbReference type="NCBI Taxonomy" id="562"/>
    <lineage>
        <taxon>Bacteria</taxon>
        <taxon>Pseudomonadati</taxon>
        <taxon>Pseudomonadota</taxon>
        <taxon>Gammaproteobacteria</taxon>
        <taxon>Enterobacterales</taxon>
        <taxon>Enterobacteriaceae</taxon>
        <taxon>Escherichia</taxon>
    </lineage>
</organism>
<keyword id="KW-0143">Chaperone</keyword>
<keyword id="KW-1029">Fimbrium biogenesis</keyword>
<keyword id="KW-0393">Immunoglobulin domain</keyword>
<keyword id="KW-0574">Periplasm</keyword>
<reference key="1">
    <citation type="journal article" date="1992" name="Mol. Microbiol.">
        <title>Horizontal gene transfer of the Escherichia coli pap and prs pili operons as a mechanism for the development of tissue-specific adhesive properties.</title>
        <authorList>
            <person name="Marklund B.-I."/>
            <person name="Tennent J.M."/>
            <person name="Garcia E."/>
            <person name="Hamers A."/>
            <person name="Baga M."/>
            <person name="Lindberg F."/>
            <person name="Gaastra W."/>
            <person name="Normark S."/>
        </authorList>
    </citation>
    <scope>NUCLEOTIDE SEQUENCE [GENOMIC DNA]</scope>
    <source>
        <strain>1442</strain>
    </source>
</reference>
<feature type="chain" id="PRO_0000208270" description="Chaperone protein PrsD">
    <location>
        <begin position="1" status="less than"/>
        <end position="115"/>
    </location>
</feature>
<feature type="non-terminal residue">
    <location>
        <position position="1"/>
    </location>
</feature>
<dbReference type="EMBL" id="X62158">
    <property type="protein sequence ID" value="CAA44084.1"/>
    <property type="molecule type" value="Genomic_DNA"/>
</dbReference>
<dbReference type="PIR" id="S25207">
    <property type="entry name" value="S25207"/>
</dbReference>
<dbReference type="SMR" id="P42183"/>
<dbReference type="GO" id="GO:0042597">
    <property type="term" value="C:periplasmic space"/>
    <property type="evidence" value="ECO:0007669"/>
    <property type="project" value="UniProtKB-SubCell"/>
</dbReference>
<dbReference type="Gene3D" id="2.60.40.10">
    <property type="entry name" value="Immunoglobulins"/>
    <property type="match status" value="1"/>
</dbReference>
<dbReference type="InterPro" id="IPR013783">
    <property type="entry name" value="Ig-like_fold"/>
</dbReference>
<dbReference type="InterPro" id="IPR050643">
    <property type="entry name" value="Periplasmic_pilus_chap"/>
</dbReference>
<dbReference type="InterPro" id="IPR036316">
    <property type="entry name" value="Pili_assmbl_chap_C_dom_sf"/>
</dbReference>
<dbReference type="InterPro" id="IPR016148">
    <property type="entry name" value="Pili_assmbl_chaperone_C"/>
</dbReference>
<dbReference type="PANTHER" id="PTHR30251:SF5">
    <property type="entry name" value="FIMBRIAL CHAPARONE PROTEIN"/>
    <property type="match status" value="1"/>
</dbReference>
<dbReference type="PANTHER" id="PTHR30251">
    <property type="entry name" value="PILUS ASSEMBLY CHAPERONE"/>
    <property type="match status" value="1"/>
</dbReference>
<dbReference type="Pfam" id="PF02753">
    <property type="entry name" value="PapD_C"/>
    <property type="match status" value="1"/>
</dbReference>
<dbReference type="SUPFAM" id="SSF49584">
    <property type="entry name" value="Periplasmic chaperone C-domain"/>
    <property type="match status" value="1"/>
</dbReference>